<proteinExistence type="inferred from homology"/>
<feature type="chain" id="PRO_0000055351" description="Protein-export protein SecB">
    <location>
        <begin position="1"/>
        <end position="161"/>
    </location>
</feature>
<comment type="function">
    <text evidence="1">One of the proteins required for the normal export of preproteins out of the cell cytoplasm. It is a molecular chaperone that binds to a subset of precursor proteins, maintaining them in a translocation-competent state. It also specifically binds to its receptor SecA.</text>
</comment>
<comment type="subunit">
    <text evidence="1">Homotetramer, a dimer of dimers. One homotetramer interacts with 1 SecA dimer.</text>
</comment>
<comment type="subcellular location">
    <subcellularLocation>
        <location evidence="1">Cytoplasm</location>
    </subcellularLocation>
</comment>
<comment type="similarity">
    <text evidence="1">Belongs to the SecB family.</text>
</comment>
<dbReference type="EMBL" id="BA000040">
    <property type="protein sequence ID" value="BAC45906.1"/>
    <property type="molecule type" value="Genomic_DNA"/>
</dbReference>
<dbReference type="RefSeq" id="NP_767281.1">
    <property type="nucleotide sequence ID" value="NC_004463.1"/>
</dbReference>
<dbReference type="RefSeq" id="WP_011083468.1">
    <property type="nucleotide sequence ID" value="NC_004463.1"/>
</dbReference>
<dbReference type="SMR" id="Q89WN7"/>
<dbReference type="FunCoup" id="Q89WN7">
    <property type="interactions" value="322"/>
</dbReference>
<dbReference type="STRING" id="224911.AAV28_00040"/>
<dbReference type="EnsemblBacteria" id="BAC45906">
    <property type="protein sequence ID" value="BAC45906"/>
    <property type="gene ID" value="BAC45906"/>
</dbReference>
<dbReference type="GeneID" id="46487914"/>
<dbReference type="KEGG" id="bja:bll0641"/>
<dbReference type="PATRIC" id="fig|224911.44.peg.10"/>
<dbReference type="eggNOG" id="COG1952">
    <property type="taxonomic scope" value="Bacteria"/>
</dbReference>
<dbReference type="HOGENOM" id="CLU_111574_0_0_5"/>
<dbReference type="InParanoid" id="Q89WN7"/>
<dbReference type="OrthoDB" id="9795145at2"/>
<dbReference type="PhylomeDB" id="Q89WN7"/>
<dbReference type="Proteomes" id="UP000002526">
    <property type="component" value="Chromosome"/>
</dbReference>
<dbReference type="GO" id="GO:0005737">
    <property type="term" value="C:cytoplasm"/>
    <property type="evidence" value="ECO:0007669"/>
    <property type="project" value="UniProtKB-SubCell"/>
</dbReference>
<dbReference type="GO" id="GO:0051082">
    <property type="term" value="F:unfolded protein binding"/>
    <property type="evidence" value="ECO:0007669"/>
    <property type="project" value="InterPro"/>
</dbReference>
<dbReference type="GO" id="GO:0006457">
    <property type="term" value="P:protein folding"/>
    <property type="evidence" value="ECO:0007669"/>
    <property type="project" value="UniProtKB-UniRule"/>
</dbReference>
<dbReference type="GO" id="GO:0051262">
    <property type="term" value="P:protein tetramerization"/>
    <property type="evidence" value="ECO:0007669"/>
    <property type="project" value="InterPro"/>
</dbReference>
<dbReference type="GO" id="GO:0015031">
    <property type="term" value="P:protein transport"/>
    <property type="evidence" value="ECO:0007669"/>
    <property type="project" value="UniProtKB-UniRule"/>
</dbReference>
<dbReference type="Gene3D" id="3.10.420.10">
    <property type="entry name" value="SecB-like"/>
    <property type="match status" value="1"/>
</dbReference>
<dbReference type="HAMAP" id="MF_00821">
    <property type="entry name" value="SecB"/>
    <property type="match status" value="1"/>
</dbReference>
<dbReference type="InterPro" id="IPR003708">
    <property type="entry name" value="SecB"/>
</dbReference>
<dbReference type="InterPro" id="IPR035958">
    <property type="entry name" value="SecB-like_sf"/>
</dbReference>
<dbReference type="NCBIfam" id="NF004392">
    <property type="entry name" value="PRK05751.1-3"/>
    <property type="match status" value="1"/>
</dbReference>
<dbReference type="NCBIfam" id="TIGR00809">
    <property type="entry name" value="secB"/>
    <property type="match status" value="1"/>
</dbReference>
<dbReference type="PANTHER" id="PTHR36918">
    <property type="match status" value="1"/>
</dbReference>
<dbReference type="PANTHER" id="PTHR36918:SF1">
    <property type="entry name" value="PROTEIN-EXPORT PROTEIN SECB"/>
    <property type="match status" value="1"/>
</dbReference>
<dbReference type="Pfam" id="PF02556">
    <property type="entry name" value="SecB"/>
    <property type="match status" value="1"/>
</dbReference>
<dbReference type="PRINTS" id="PR01594">
    <property type="entry name" value="SECBCHAPRONE"/>
</dbReference>
<dbReference type="SUPFAM" id="SSF54611">
    <property type="entry name" value="SecB-like"/>
    <property type="match status" value="1"/>
</dbReference>
<name>SECB_BRADU</name>
<reference key="1">
    <citation type="journal article" date="2002" name="DNA Res.">
        <title>Complete genomic sequence of nitrogen-fixing symbiotic bacterium Bradyrhizobium japonicum USDA110.</title>
        <authorList>
            <person name="Kaneko T."/>
            <person name="Nakamura Y."/>
            <person name="Sato S."/>
            <person name="Minamisawa K."/>
            <person name="Uchiumi T."/>
            <person name="Sasamoto S."/>
            <person name="Watanabe A."/>
            <person name="Idesawa K."/>
            <person name="Iriguchi M."/>
            <person name="Kawashima K."/>
            <person name="Kohara M."/>
            <person name="Matsumoto M."/>
            <person name="Shimpo S."/>
            <person name="Tsuruoka H."/>
            <person name="Wada T."/>
            <person name="Yamada M."/>
            <person name="Tabata S."/>
        </authorList>
    </citation>
    <scope>NUCLEOTIDE SEQUENCE [LARGE SCALE GENOMIC DNA]</scope>
    <source>
        <strain>JCM 10833 / BCRC 13528 / IAM 13628 / NBRC 14792 / USDA 110</strain>
    </source>
</reference>
<accession>Q89WN7</accession>
<evidence type="ECO:0000255" key="1">
    <source>
        <dbReference type="HAMAP-Rule" id="MF_00821"/>
    </source>
</evidence>
<protein>
    <recommendedName>
        <fullName evidence="1">Protein-export protein SecB</fullName>
    </recommendedName>
</protein>
<keyword id="KW-0143">Chaperone</keyword>
<keyword id="KW-0963">Cytoplasm</keyword>
<keyword id="KW-0653">Protein transport</keyword>
<keyword id="KW-1185">Reference proteome</keyword>
<keyword id="KW-0811">Translocation</keyword>
<keyword id="KW-0813">Transport</keyword>
<organism>
    <name type="scientific">Bradyrhizobium diazoefficiens (strain JCM 10833 / BCRC 13528 / IAM 13628 / NBRC 14792 / USDA 110)</name>
    <dbReference type="NCBI Taxonomy" id="224911"/>
    <lineage>
        <taxon>Bacteria</taxon>
        <taxon>Pseudomonadati</taxon>
        <taxon>Pseudomonadota</taxon>
        <taxon>Alphaproteobacteria</taxon>
        <taxon>Hyphomicrobiales</taxon>
        <taxon>Nitrobacteraceae</taxon>
        <taxon>Bradyrhizobium</taxon>
    </lineage>
</organism>
<gene>
    <name evidence="1" type="primary">secB</name>
    <name type="ordered locus">bll0641</name>
</gene>
<sequence>MTNGNGTPPEAAPAPQLNVLAQYTKDLSFENPNAPSSLQQQGQPPQINIQINVGANNLSEQEFEVTLSVEGKAETAGKVMFSFELAYAGVFRIVNVPKENLHPLVMIECPRLLFPFAREIIATAVRDGGFPPLMLDPVDFVGLYRQNMERQMAAGGQAGQA</sequence>